<comment type="function">
    <text evidence="1">RuBisCO catalyzes two reactions: the carboxylation of D-ribulose 1,5-bisphosphate, the primary event in carbon dioxide fixation, as well as the oxidative fragmentation of the pentose substrate in the photorespiration process. Both reactions occur simultaneously and in competition at the same active site.</text>
</comment>
<comment type="catalytic activity">
    <reaction evidence="1">
        <text>2 (2R)-3-phosphoglycerate + 2 H(+) = D-ribulose 1,5-bisphosphate + CO2 + H2O</text>
        <dbReference type="Rhea" id="RHEA:23124"/>
        <dbReference type="ChEBI" id="CHEBI:15377"/>
        <dbReference type="ChEBI" id="CHEBI:15378"/>
        <dbReference type="ChEBI" id="CHEBI:16526"/>
        <dbReference type="ChEBI" id="CHEBI:57870"/>
        <dbReference type="ChEBI" id="CHEBI:58272"/>
        <dbReference type="EC" id="4.1.1.39"/>
    </reaction>
</comment>
<comment type="catalytic activity">
    <reaction evidence="1">
        <text>D-ribulose 1,5-bisphosphate + O2 = 2-phosphoglycolate + (2R)-3-phosphoglycerate + 2 H(+)</text>
        <dbReference type="Rhea" id="RHEA:36631"/>
        <dbReference type="ChEBI" id="CHEBI:15378"/>
        <dbReference type="ChEBI" id="CHEBI:15379"/>
        <dbReference type="ChEBI" id="CHEBI:57870"/>
        <dbReference type="ChEBI" id="CHEBI:58033"/>
        <dbReference type="ChEBI" id="CHEBI:58272"/>
    </reaction>
</comment>
<comment type="cofactor">
    <cofactor evidence="1">
        <name>Mg(2+)</name>
        <dbReference type="ChEBI" id="CHEBI:18420"/>
    </cofactor>
    <text evidence="1">Binds 1 Mg(2+) ion per subunit.</text>
</comment>
<comment type="subunit">
    <text evidence="1">Heterohexadecamer of 8 large chains and 8 small chains; disulfide-linked. The disulfide link is formed within the large subunit homodimers.</text>
</comment>
<comment type="subcellular location">
    <subcellularLocation>
        <location>Plastid</location>
        <location>Chloroplast</location>
    </subcellularLocation>
</comment>
<comment type="PTM">
    <text evidence="1">The disulfide bond which can form in the large chain dimeric partners within the hexadecamer appears to be associated with oxidative stress and protein turnover.</text>
</comment>
<comment type="miscellaneous">
    <text evidence="1">The basic functional RuBisCO is composed of a large chain homodimer in a 'head-to-tail' conformation. In form I RuBisCO this homodimer is arranged in a barrel-like tetramer with the small subunits forming a tetrameric 'cap' on each end of the 'barrel'.</text>
</comment>
<comment type="similarity">
    <text evidence="1">Belongs to the RuBisCO large chain family. Type I subfamily.</text>
</comment>
<feature type="propeptide" id="PRO_0000031115" evidence="1">
    <location>
        <begin position="1"/>
        <end position="2"/>
    </location>
</feature>
<feature type="chain" id="PRO_0000031116" description="Ribulose bisphosphate carboxylase large chain">
    <location>
        <begin position="3"/>
        <end position="475"/>
    </location>
</feature>
<feature type="active site" description="Proton acceptor" evidence="1">
    <location>
        <position position="175"/>
    </location>
</feature>
<feature type="active site" description="Proton acceptor" evidence="1">
    <location>
        <position position="294"/>
    </location>
</feature>
<feature type="binding site" description="in homodimeric partner" evidence="1">
    <location>
        <position position="123"/>
    </location>
    <ligand>
        <name>substrate</name>
    </ligand>
</feature>
<feature type="binding site" evidence="1">
    <location>
        <position position="173"/>
    </location>
    <ligand>
        <name>substrate</name>
    </ligand>
</feature>
<feature type="binding site" evidence="1">
    <location>
        <position position="177"/>
    </location>
    <ligand>
        <name>substrate</name>
    </ligand>
</feature>
<feature type="binding site" description="via carbamate group" evidence="1">
    <location>
        <position position="201"/>
    </location>
    <ligand>
        <name>Mg(2+)</name>
        <dbReference type="ChEBI" id="CHEBI:18420"/>
    </ligand>
</feature>
<feature type="binding site" evidence="1">
    <location>
        <position position="203"/>
    </location>
    <ligand>
        <name>Mg(2+)</name>
        <dbReference type="ChEBI" id="CHEBI:18420"/>
    </ligand>
</feature>
<feature type="binding site" evidence="1">
    <location>
        <position position="204"/>
    </location>
    <ligand>
        <name>Mg(2+)</name>
        <dbReference type="ChEBI" id="CHEBI:18420"/>
    </ligand>
</feature>
<feature type="binding site" evidence="1">
    <location>
        <position position="295"/>
    </location>
    <ligand>
        <name>substrate</name>
    </ligand>
</feature>
<feature type="binding site" evidence="1">
    <location>
        <position position="327"/>
    </location>
    <ligand>
        <name>substrate</name>
    </ligand>
</feature>
<feature type="binding site" evidence="1">
    <location>
        <position position="379"/>
    </location>
    <ligand>
        <name>substrate</name>
    </ligand>
</feature>
<feature type="site" description="Transition state stabilizer" evidence="1">
    <location>
        <position position="334"/>
    </location>
</feature>
<feature type="modified residue" description="N-acetylproline" evidence="1">
    <location>
        <position position="3"/>
    </location>
</feature>
<feature type="modified residue" description="N6,N6,N6-trimethyllysine" evidence="1">
    <location>
        <position position="14"/>
    </location>
</feature>
<feature type="modified residue" description="N6-carboxylysine" evidence="1">
    <location>
        <position position="201"/>
    </location>
</feature>
<feature type="disulfide bond" description="Interchain; in linked form" evidence="1">
    <location>
        <position position="247"/>
    </location>
</feature>
<name>RBL_ANGLY</name>
<organism>
    <name type="scientific">Angiopteris lygodiifolia</name>
    <name type="common">Turnip fern</name>
    <dbReference type="NCBI Taxonomy" id="3267"/>
    <lineage>
        <taxon>Eukaryota</taxon>
        <taxon>Viridiplantae</taxon>
        <taxon>Streptophyta</taxon>
        <taxon>Embryophyta</taxon>
        <taxon>Tracheophyta</taxon>
        <taxon>Polypodiopsida</taxon>
        <taxon>Marattiidae</taxon>
        <taxon>Marattiales</taxon>
        <taxon>Marattiaceae</taxon>
        <taxon>Angiopteris</taxon>
    </lineage>
</organism>
<reference key="1">
    <citation type="journal article" date="1992" name="Plant Mol. Biol.">
        <title>Nucleotide sequence of atpB, rbcL, trnR, dedB and psaI chloroplast genes from a fern Angiopteris lygodiifolia: a possible emergence of Spermatophyta lineage before the separation of Bryophyta and Pteridophyta.</title>
        <authorList>
            <person name="Yoshinaga K."/>
            <person name="Kubota Y."/>
            <person name="Ishii T."/>
            <person name="Wada K."/>
        </authorList>
    </citation>
    <scope>NUCLEOTIDE SEQUENCE [GENOMIC DNA]</scope>
    <source>
        <strain>Rosenstock</strain>
    </source>
</reference>
<evidence type="ECO:0000255" key="1">
    <source>
        <dbReference type="HAMAP-Rule" id="MF_01338"/>
    </source>
</evidence>
<dbReference type="EC" id="4.1.1.39" evidence="1"/>
<dbReference type="EMBL" id="X58429">
    <property type="protein sequence ID" value="CAA41332.1"/>
    <property type="molecule type" value="Genomic_DNA"/>
</dbReference>
<dbReference type="PIR" id="S19229">
    <property type="entry name" value="RKFNLT"/>
</dbReference>
<dbReference type="SMR" id="P28258"/>
<dbReference type="GO" id="GO:0009507">
    <property type="term" value="C:chloroplast"/>
    <property type="evidence" value="ECO:0007669"/>
    <property type="project" value="UniProtKB-SubCell"/>
</dbReference>
<dbReference type="GO" id="GO:0000287">
    <property type="term" value="F:magnesium ion binding"/>
    <property type="evidence" value="ECO:0007669"/>
    <property type="project" value="UniProtKB-UniRule"/>
</dbReference>
<dbReference type="GO" id="GO:0004497">
    <property type="term" value="F:monooxygenase activity"/>
    <property type="evidence" value="ECO:0007669"/>
    <property type="project" value="UniProtKB-KW"/>
</dbReference>
<dbReference type="GO" id="GO:0016984">
    <property type="term" value="F:ribulose-bisphosphate carboxylase activity"/>
    <property type="evidence" value="ECO:0007669"/>
    <property type="project" value="UniProtKB-UniRule"/>
</dbReference>
<dbReference type="GO" id="GO:0009853">
    <property type="term" value="P:photorespiration"/>
    <property type="evidence" value="ECO:0007669"/>
    <property type="project" value="UniProtKB-KW"/>
</dbReference>
<dbReference type="GO" id="GO:0019253">
    <property type="term" value="P:reductive pentose-phosphate cycle"/>
    <property type="evidence" value="ECO:0007669"/>
    <property type="project" value="UniProtKB-UniRule"/>
</dbReference>
<dbReference type="CDD" id="cd08212">
    <property type="entry name" value="RuBisCO_large_I"/>
    <property type="match status" value="1"/>
</dbReference>
<dbReference type="FunFam" id="3.20.20.110:FF:000001">
    <property type="entry name" value="Ribulose bisphosphate carboxylase large chain"/>
    <property type="match status" value="1"/>
</dbReference>
<dbReference type="FunFam" id="3.30.70.150:FF:000001">
    <property type="entry name" value="Ribulose bisphosphate carboxylase large chain"/>
    <property type="match status" value="1"/>
</dbReference>
<dbReference type="Gene3D" id="3.20.20.110">
    <property type="entry name" value="Ribulose bisphosphate carboxylase, large subunit, C-terminal domain"/>
    <property type="match status" value="1"/>
</dbReference>
<dbReference type="Gene3D" id="3.30.70.150">
    <property type="entry name" value="RuBisCO large subunit, N-terminal domain"/>
    <property type="match status" value="1"/>
</dbReference>
<dbReference type="HAMAP" id="MF_01338">
    <property type="entry name" value="RuBisCO_L_type1"/>
    <property type="match status" value="1"/>
</dbReference>
<dbReference type="InterPro" id="IPR033966">
    <property type="entry name" value="RuBisCO"/>
</dbReference>
<dbReference type="InterPro" id="IPR020878">
    <property type="entry name" value="RuBisCo_large_chain_AS"/>
</dbReference>
<dbReference type="InterPro" id="IPR000685">
    <property type="entry name" value="RuBisCO_lsu_C"/>
</dbReference>
<dbReference type="InterPro" id="IPR036376">
    <property type="entry name" value="RuBisCO_lsu_C_sf"/>
</dbReference>
<dbReference type="InterPro" id="IPR017443">
    <property type="entry name" value="RuBisCO_lsu_fd_N"/>
</dbReference>
<dbReference type="InterPro" id="IPR036422">
    <property type="entry name" value="RuBisCO_lsu_N_sf"/>
</dbReference>
<dbReference type="InterPro" id="IPR020888">
    <property type="entry name" value="RuBisCO_lsuI"/>
</dbReference>
<dbReference type="NCBIfam" id="NF003252">
    <property type="entry name" value="PRK04208.1"/>
    <property type="match status" value="1"/>
</dbReference>
<dbReference type="PANTHER" id="PTHR42704">
    <property type="entry name" value="RIBULOSE BISPHOSPHATE CARBOXYLASE"/>
    <property type="match status" value="1"/>
</dbReference>
<dbReference type="PANTHER" id="PTHR42704:SF17">
    <property type="entry name" value="RIBULOSE BISPHOSPHATE CARBOXYLASE LARGE CHAIN"/>
    <property type="match status" value="1"/>
</dbReference>
<dbReference type="Pfam" id="PF00016">
    <property type="entry name" value="RuBisCO_large"/>
    <property type="match status" value="1"/>
</dbReference>
<dbReference type="Pfam" id="PF02788">
    <property type="entry name" value="RuBisCO_large_N"/>
    <property type="match status" value="1"/>
</dbReference>
<dbReference type="SFLD" id="SFLDG01052">
    <property type="entry name" value="RuBisCO"/>
    <property type="match status" value="1"/>
</dbReference>
<dbReference type="SFLD" id="SFLDS00014">
    <property type="entry name" value="RuBisCO"/>
    <property type="match status" value="1"/>
</dbReference>
<dbReference type="SFLD" id="SFLDG00301">
    <property type="entry name" value="RuBisCO-like_proteins"/>
    <property type="match status" value="1"/>
</dbReference>
<dbReference type="SUPFAM" id="SSF51649">
    <property type="entry name" value="RuBisCo, C-terminal domain"/>
    <property type="match status" value="1"/>
</dbReference>
<dbReference type="SUPFAM" id="SSF54966">
    <property type="entry name" value="RuBisCO, large subunit, small (N-terminal) domain"/>
    <property type="match status" value="1"/>
</dbReference>
<dbReference type="PROSITE" id="PS00157">
    <property type="entry name" value="RUBISCO_LARGE"/>
    <property type="match status" value="1"/>
</dbReference>
<gene>
    <name evidence="1" type="primary">rbcL</name>
</gene>
<protein>
    <recommendedName>
        <fullName evidence="1">Ribulose bisphosphate carboxylase large chain</fullName>
        <shortName evidence="1">RuBisCO large subunit</shortName>
        <ecNumber evidence="1">4.1.1.39</ecNumber>
    </recommendedName>
</protein>
<sequence length="475" mass="52773">MSPQTETKTGFGFKAGVKDYRLNYYTPEYETKDTDILAAFRMTPQPGVPPEEAGAAVAAESSTGTWTTVWTDGLTSLDRYKGRCYDIEPVAGEENQYIAYVAYPLDLFEEGSVTNMFTSIVGNVFGFKALRALRLEDLRVPPAYSKTFQGPPHGIQAERDKLNKYGRPLLGCTIKPKLGLSAKNYGRAVYECLRGGLDFTKDDENVNSQPFMRWRDRFLFVAEALFKSQAETGEVKGHYLNATAGTCEEMMKRAIFARELGAPIVMHDYLTGGFTANTSLAHYCRDNGLLLHIHRAMHAVIDRQRNHGMHFRVLAKALRMSGGDHVHAGTVVGKLEGEREVTLGFVDSLRDDYIEKDRSRGIYFTQDWVSMPGVFPVASGGIHVWHMPALTEIFGDDSVLQFGGGTLGHPWGNAPGAVANRVASEACVQARNEGRDLAREGNEIIREASKWSPELAAACEVWKEIKFEFETIDTL</sequence>
<geneLocation type="chloroplast"/>
<accession>P28258</accession>
<keyword id="KW-0007">Acetylation</keyword>
<keyword id="KW-0113">Calvin cycle</keyword>
<keyword id="KW-0120">Carbon dioxide fixation</keyword>
<keyword id="KW-0150">Chloroplast</keyword>
<keyword id="KW-1015">Disulfide bond</keyword>
<keyword id="KW-0456">Lyase</keyword>
<keyword id="KW-0460">Magnesium</keyword>
<keyword id="KW-0479">Metal-binding</keyword>
<keyword id="KW-0488">Methylation</keyword>
<keyword id="KW-0503">Monooxygenase</keyword>
<keyword id="KW-0560">Oxidoreductase</keyword>
<keyword id="KW-0601">Photorespiration</keyword>
<keyword id="KW-0602">Photosynthesis</keyword>
<keyword id="KW-0934">Plastid</keyword>
<proteinExistence type="inferred from homology"/>